<organism>
    <name type="scientific">Haemophilus influenzae (strain ATCC 51907 / DSM 11121 / KW20 / Rd)</name>
    <dbReference type="NCBI Taxonomy" id="71421"/>
    <lineage>
        <taxon>Bacteria</taxon>
        <taxon>Pseudomonadati</taxon>
        <taxon>Pseudomonadota</taxon>
        <taxon>Gammaproteobacteria</taxon>
        <taxon>Pasteurellales</taxon>
        <taxon>Pasteurellaceae</taxon>
        <taxon>Haemophilus</taxon>
    </lineage>
</organism>
<protein>
    <recommendedName>
        <fullName>Uncharacterized protein HI_1456</fullName>
    </recommendedName>
</protein>
<evidence type="ECO:0000255" key="1"/>
<evidence type="ECO:0000305" key="2"/>
<reference key="1">
    <citation type="journal article" date="1995" name="Science">
        <title>Whole-genome random sequencing and assembly of Haemophilus influenzae Rd.</title>
        <authorList>
            <person name="Fleischmann R.D."/>
            <person name="Adams M.D."/>
            <person name="White O."/>
            <person name="Clayton R.A."/>
            <person name="Kirkness E.F."/>
            <person name="Kerlavage A.R."/>
            <person name="Bult C.J."/>
            <person name="Tomb J.-F."/>
            <person name="Dougherty B.A."/>
            <person name="Merrick J.M."/>
            <person name="McKenney K."/>
            <person name="Sutton G.G."/>
            <person name="FitzHugh W."/>
            <person name="Fields C.A."/>
            <person name="Gocayne J.D."/>
            <person name="Scott J.D."/>
            <person name="Shirley R."/>
            <person name="Liu L.-I."/>
            <person name="Glodek A."/>
            <person name="Kelley J.M."/>
            <person name="Weidman J.F."/>
            <person name="Phillips C.A."/>
            <person name="Spriggs T."/>
            <person name="Hedblom E."/>
            <person name="Cotton M.D."/>
            <person name="Utterback T.R."/>
            <person name="Hanna M.C."/>
            <person name="Nguyen D.T."/>
            <person name="Saudek D.M."/>
            <person name="Brandon R.C."/>
            <person name="Fine L.D."/>
            <person name="Fritchman J.L."/>
            <person name="Fuhrmann J.L."/>
            <person name="Geoghagen N.S.M."/>
            <person name="Gnehm C.L."/>
            <person name="McDonald L.A."/>
            <person name="Small K.V."/>
            <person name="Fraser C.M."/>
            <person name="Smith H.O."/>
            <person name="Venter J.C."/>
        </authorList>
    </citation>
    <scope>NUCLEOTIDE SEQUENCE [LARGE SCALE GENOMIC DNA]</scope>
    <source>
        <strain>ATCC 51907 / DSM 11121 / KW20 / Rd</strain>
    </source>
</reference>
<proteinExistence type="predicted"/>
<name>Y1456_HAEIN</name>
<keyword id="KW-0472">Membrane</keyword>
<keyword id="KW-1185">Reference proteome</keyword>
<keyword id="KW-0812">Transmembrane</keyword>
<keyword id="KW-1133">Transmembrane helix</keyword>
<gene>
    <name type="ordered locus">HI_1456</name>
</gene>
<accession>P44203</accession>
<comment type="subcellular location">
    <subcellularLocation>
        <location evidence="2">Membrane</location>
        <topology evidence="2">Single-pass membrane protein</topology>
    </subcellularLocation>
</comment>
<dbReference type="EMBL" id="L42023">
    <property type="protein sequence ID" value="AAC23106.1"/>
    <property type="molecule type" value="Genomic_DNA"/>
</dbReference>
<dbReference type="PIR" id="F64030">
    <property type="entry name" value="F64030"/>
</dbReference>
<dbReference type="RefSeq" id="NP_439607.2">
    <property type="nucleotide sequence ID" value="NC_000907.1"/>
</dbReference>
<dbReference type="SMR" id="P44203"/>
<dbReference type="STRING" id="71421.HI_1456"/>
<dbReference type="EnsemblBacteria" id="AAC23106">
    <property type="protein sequence ID" value="AAC23106"/>
    <property type="gene ID" value="HI_1456"/>
</dbReference>
<dbReference type="KEGG" id="hin:HI_1456"/>
<dbReference type="PATRIC" id="fig|71421.8.peg.1517"/>
<dbReference type="eggNOG" id="ENOG50313PE">
    <property type="taxonomic scope" value="Bacteria"/>
</dbReference>
<dbReference type="HOGENOM" id="CLU_125328_0_0_6"/>
<dbReference type="OrthoDB" id="7375569at2"/>
<dbReference type="Proteomes" id="UP000000579">
    <property type="component" value="Chromosome"/>
</dbReference>
<dbReference type="GO" id="GO:0016020">
    <property type="term" value="C:membrane"/>
    <property type="evidence" value="ECO:0007669"/>
    <property type="project" value="UniProtKB-SubCell"/>
</dbReference>
<dbReference type="InterPro" id="IPR022548">
    <property type="entry name" value="DUF2846"/>
</dbReference>
<dbReference type="InterPro" id="IPR016596">
    <property type="entry name" value="UCP012335"/>
</dbReference>
<dbReference type="Pfam" id="PF11008">
    <property type="entry name" value="DUF2846"/>
    <property type="match status" value="1"/>
</dbReference>
<dbReference type="PIRSF" id="PIRSF012335">
    <property type="entry name" value="UCP012335"/>
    <property type="match status" value="1"/>
</dbReference>
<sequence>MFLMWALRLVYVLVSNGYFVKQLFARASIIGVALLLSACATVPMASVEESNTAKQFRSPEKGNSGLYIYRDSFIGKALKKDLYIDDKFIGESAPDVFFYKTIKAGEHKISTESEFSNSDLNIKTESGKNYFIRQYTKFGVFVGGANLEQVSEEEGKKAISKLNMAVSH</sequence>
<feature type="chain" id="PRO_0000078060" description="Uncharacterized protein HI_1456">
    <location>
        <begin position="1"/>
        <end position="168"/>
    </location>
</feature>
<feature type="transmembrane region" description="Helical" evidence="1">
    <location>
        <begin position="23"/>
        <end position="47"/>
    </location>
</feature>